<proteinExistence type="inferred from homology"/>
<accession>Q5WZI8</accession>
<protein>
    <recommendedName>
        <fullName evidence="1">Small ribosomal subunit protein uS4</fullName>
    </recommendedName>
    <alternativeName>
        <fullName evidence="2">30S ribosomal protein S4</fullName>
    </alternativeName>
</protein>
<comment type="function">
    <text evidence="1">One of the primary rRNA binding proteins, it binds directly to 16S rRNA where it nucleates assembly of the body of the 30S subunit.</text>
</comment>
<comment type="function">
    <text evidence="1">With S5 and S12 plays an important role in translational accuracy.</text>
</comment>
<comment type="subunit">
    <text evidence="1">Part of the 30S ribosomal subunit. Contacts protein S5. The interaction surface between S4 and S5 is involved in control of translational fidelity.</text>
</comment>
<comment type="similarity">
    <text evidence="1">Belongs to the universal ribosomal protein uS4 family.</text>
</comment>
<sequence length="206" mass="23261">MARYLGPKCKLSRREGCDLLLKSGVRDHKSKCKSEKLPGQHGDKKPRLNSYGIQLREKQKIRRLYGILEKQFRNYYKKAARQKGSTGENLMALLERRLDNVVYRMGFASTRAEARQLVAHKAILVNDKVVNVPSFLVNPGDTVSVRQKAKNQGRIQAALALSEQRAPCDWITVDTGSFKGTFSTAPTLMDLSSDYNVNLVVELYSK</sequence>
<gene>
    <name evidence="1" type="primary">rpsD</name>
    <name type="ordered locus">lpl0394</name>
</gene>
<keyword id="KW-0687">Ribonucleoprotein</keyword>
<keyword id="KW-0689">Ribosomal protein</keyword>
<keyword id="KW-0694">RNA-binding</keyword>
<keyword id="KW-0699">rRNA-binding</keyword>
<feature type="chain" id="PRO_0000132401" description="Small ribosomal subunit protein uS4">
    <location>
        <begin position="1"/>
        <end position="206"/>
    </location>
</feature>
<feature type="domain" description="S4 RNA-binding" evidence="1">
    <location>
        <begin position="96"/>
        <end position="161"/>
    </location>
</feature>
<evidence type="ECO:0000255" key="1">
    <source>
        <dbReference type="HAMAP-Rule" id="MF_01306"/>
    </source>
</evidence>
<evidence type="ECO:0000305" key="2"/>
<reference key="1">
    <citation type="journal article" date="2004" name="Nat. Genet.">
        <title>Evidence in the Legionella pneumophila genome for exploitation of host cell functions and high genome plasticity.</title>
        <authorList>
            <person name="Cazalet C."/>
            <person name="Rusniok C."/>
            <person name="Brueggemann H."/>
            <person name="Zidane N."/>
            <person name="Magnier A."/>
            <person name="Ma L."/>
            <person name="Tichit M."/>
            <person name="Jarraud S."/>
            <person name="Bouchier C."/>
            <person name="Vandenesch F."/>
            <person name="Kunst F."/>
            <person name="Etienne J."/>
            <person name="Glaser P."/>
            <person name="Buchrieser C."/>
        </authorList>
    </citation>
    <scope>NUCLEOTIDE SEQUENCE [LARGE SCALE GENOMIC DNA]</scope>
    <source>
        <strain>Lens</strain>
    </source>
</reference>
<name>RS4_LEGPL</name>
<dbReference type="EMBL" id="CR628337">
    <property type="protein sequence ID" value="CAH14624.1"/>
    <property type="molecule type" value="Genomic_DNA"/>
</dbReference>
<dbReference type="RefSeq" id="WP_010946102.1">
    <property type="nucleotide sequence ID" value="NC_006369.1"/>
</dbReference>
<dbReference type="SMR" id="Q5WZI8"/>
<dbReference type="GeneID" id="57034356"/>
<dbReference type="KEGG" id="lpf:lpl0394"/>
<dbReference type="LegioList" id="lpl0394"/>
<dbReference type="HOGENOM" id="CLU_092403_0_2_6"/>
<dbReference type="Proteomes" id="UP000002517">
    <property type="component" value="Chromosome"/>
</dbReference>
<dbReference type="GO" id="GO:0015935">
    <property type="term" value="C:small ribosomal subunit"/>
    <property type="evidence" value="ECO:0007669"/>
    <property type="project" value="InterPro"/>
</dbReference>
<dbReference type="GO" id="GO:0019843">
    <property type="term" value="F:rRNA binding"/>
    <property type="evidence" value="ECO:0007669"/>
    <property type="project" value="UniProtKB-UniRule"/>
</dbReference>
<dbReference type="GO" id="GO:0003735">
    <property type="term" value="F:structural constituent of ribosome"/>
    <property type="evidence" value="ECO:0007669"/>
    <property type="project" value="InterPro"/>
</dbReference>
<dbReference type="GO" id="GO:0042274">
    <property type="term" value="P:ribosomal small subunit biogenesis"/>
    <property type="evidence" value="ECO:0007669"/>
    <property type="project" value="TreeGrafter"/>
</dbReference>
<dbReference type="GO" id="GO:0006412">
    <property type="term" value="P:translation"/>
    <property type="evidence" value="ECO:0007669"/>
    <property type="project" value="UniProtKB-UniRule"/>
</dbReference>
<dbReference type="CDD" id="cd00165">
    <property type="entry name" value="S4"/>
    <property type="match status" value="1"/>
</dbReference>
<dbReference type="FunFam" id="1.10.1050.10:FF:000001">
    <property type="entry name" value="30S ribosomal protein S4"/>
    <property type="match status" value="1"/>
</dbReference>
<dbReference type="FunFam" id="3.10.290.10:FF:000001">
    <property type="entry name" value="30S ribosomal protein S4"/>
    <property type="match status" value="1"/>
</dbReference>
<dbReference type="Gene3D" id="1.10.1050.10">
    <property type="entry name" value="Ribosomal Protein S4 Delta 41, Chain A, domain 1"/>
    <property type="match status" value="1"/>
</dbReference>
<dbReference type="Gene3D" id="3.10.290.10">
    <property type="entry name" value="RNA-binding S4 domain"/>
    <property type="match status" value="1"/>
</dbReference>
<dbReference type="HAMAP" id="MF_01306_B">
    <property type="entry name" value="Ribosomal_uS4_B"/>
    <property type="match status" value="1"/>
</dbReference>
<dbReference type="InterPro" id="IPR022801">
    <property type="entry name" value="Ribosomal_uS4"/>
</dbReference>
<dbReference type="InterPro" id="IPR005709">
    <property type="entry name" value="Ribosomal_uS4_bac-type"/>
</dbReference>
<dbReference type="InterPro" id="IPR018079">
    <property type="entry name" value="Ribosomal_uS4_CS"/>
</dbReference>
<dbReference type="InterPro" id="IPR001912">
    <property type="entry name" value="Ribosomal_uS4_N"/>
</dbReference>
<dbReference type="InterPro" id="IPR002942">
    <property type="entry name" value="S4_RNA-bd"/>
</dbReference>
<dbReference type="InterPro" id="IPR036986">
    <property type="entry name" value="S4_RNA-bd_sf"/>
</dbReference>
<dbReference type="NCBIfam" id="NF003717">
    <property type="entry name" value="PRK05327.1"/>
    <property type="match status" value="1"/>
</dbReference>
<dbReference type="NCBIfam" id="TIGR01017">
    <property type="entry name" value="rpsD_bact"/>
    <property type="match status" value="1"/>
</dbReference>
<dbReference type="PANTHER" id="PTHR11831">
    <property type="entry name" value="30S 40S RIBOSOMAL PROTEIN"/>
    <property type="match status" value="1"/>
</dbReference>
<dbReference type="PANTHER" id="PTHR11831:SF4">
    <property type="entry name" value="SMALL RIBOSOMAL SUBUNIT PROTEIN US4M"/>
    <property type="match status" value="1"/>
</dbReference>
<dbReference type="Pfam" id="PF00163">
    <property type="entry name" value="Ribosomal_S4"/>
    <property type="match status" value="1"/>
</dbReference>
<dbReference type="Pfam" id="PF01479">
    <property type="entry name" value="S4"/>
    <property type="match status" value="1"/>
</dbReference>
<dbReference type="SMART" id="SM01390">
    <property type="entry name" value="Ribosomal_S4"/>
    <property type="match status" value="1"/>
</dbReference>
<dbReference type="SMART" id="SM00363">
    <property type="entry name" value="S4"/>
    <property type="match status" value="1"/>
</dbReference>
<dbReference type="SUPFAM" id="SSF55174">
    <property type="entry name" value="Alpha-L RNA-binding motif"/>
    <property type="match status" value="1"/>
</dbReference>
<dbReference type="PROSITE" id="PS00632">
    <property type="entry name" value="RIBOSOMAL_S4"/>
    <property type="match status" value="1"/>
</dbReference>
<dbReference type="PROSITE" id="PS50889">
    <property type="entry name" value="S4"/>
    <property type="match status" value="1"/>
</dbReference>
<organism>
    <name type="scientific">Legionella pneumophila (strain Lens)</name>
    <dbReference type="NCBI Taxonomy" id="297245"/>
    <lineage>
        <taxon>Bacteria</taxon>
        <taxon>Pseudomonadati</taxon>
        <taxon>Pseudomonadota</taxon>
        <taxon>Gammaproteobacteria</taxon>
        <taxon>Legionellales</taxon>
        <taxon>Legionellaceae</taxon>
        <taxon>Legionella</taxon>
    </lineage>
</organism>